<evidence type="ECO:0000255" key="1">
    <source>
        <dbReference type="HAMAP-Rule" id="MF_01369"/>
    </source>
</evidence>
<evidence type="ECO:0000305" key="2"/>
<comment type="function">
    <text evidence="1">One of the early assembly proteins it binds 23S rRNA. One of the proteins that surrounds the polypeptide exit tunnel on the outside of the ribosome. Forms the main docking site for trigger factor binding to the ribosome.</text>
</comment>
<comment type="subunit">
    <text evidence="1">Part of the 50S ribosomal subunit. Contacts protein L29, and trigger factor when it is bound to the ribosome.</text>
</comment>
<comment type="similarity">
    <text evidence="1">Belongs to the universal ribosomal protein uL23 family.</text>
</comment>
<accession>C5CC60</accession>
<gene>
    <name evidence="1" type="primary">rplW</name>
    <name type="ordered locus">Mlut_17140</name>
</gene>
<organism>
    <name type="scientific">Micrococcus luteus (strain ATCC 4698 / DSM 20030 / JCM 1464 / CCM 169 / CCUG 5858 / IAM 1056 / NBRC 3333 / NCIMB 9278 / NCTC 2665 / VKM Ac-2230)</name>
    <name type="common">Micrococcus lysodeikticus</name>
    <dbReference type="NCBI Taxonomy" id="465515"/>
    <lineage>
        <taxon>Bacteria</taxon>
        <taxon>Bacillati</taxon>
        <taxon>Actinomycetota</taxon>
        <taxon>Actinomycetes</taxon>
        <taxon>Micrococcales</taxon>
        <taxon>Micrococcaceae</taxon>
        <taxon>Micrococcus</taxon>
    </lineage>
</organism>
<feature type="chain" id="PRO_1000215039" description="Large ribosomal subunit protein uL23">
    <location>
        <begin position="1"/>
        <end position="101"/>
    </location>
</feature>
<keyword id="KW-1185">Reference proteome</keyword>
<keyword id="KW-0687">Ribonucleoprotein</keyword>
<keyword id="KW-0689">Ribosomal protein</keyword>
<keyword id="KW-0694">RNA-binding</keyword>
<keyword id="KW-0699">rRNA-binding</keyword>
<name>RL23_MICLC</name>
<dbReference type="EMBL" id="CP001628">
    <property type="protein sequence ID" value="ACS31201.1"/>
    <property type="molecule type" value="Genomic_DNA"/>
</dbReference>
<dbReference type="RefSeq" id="WP_002857471.1">
    <property type="nucleotide sequence ID" value="NZ_WBMF01000001.1"/>
</dbReference>
<dbReference type="SMR" id="C5CC60"/>
<dbReference type="STRING" id="465515.Mlut_17140"/>
<dbReference type="EnsemblBacteria" id="ACS31201">
    <property type="protein sequence ID" value="ACS31201"/>
    <property type="gene ID" value="Mlut_17140"/>
</dbReference>
<dbReference type="GeneID" id="93364272"/>
<dbReference type="KEGG" id="mlu:Mlut_17140"/>
<dbReference type="eggNOG" id="COG0089">
    <property type="taxonomic scope" value="Bacteria"/>
</dbReference>
<dbReference type="HOGENOM" id="CLU_037562_3_2_11"/>
<dbReference type="Proteomes" id="UP000000738">
    <property type="component" value="Chromosome"/>
</dbReference>
<dbReference type="GO" id="GO:1990904">
    <property type="term" value="C:ribonucleoprotein complex"/>
    <property type="evidence" value="ECO:0007669"/>
    <property type="project" value="UniProtKB-KW"/>
</dbReference>
<dbReference type="GO" id="GO:0005840">
    <property type="term" value="C:ribosome"/>
    <property type="evidence" value="ECO:0007669"/>
    <property type="project" value="UniProtKB-KW"/>
</dbReference>
<dbReference type="GO" id="GO:0019843">
    <property type="term" value="F:rRNA binding"/>
    <property type="evidence" value="ECO:0007669"/>
    <property type="project" value="UniProtKB-UniRule"/>
</dbReference>
<dbReference type="GO" id="GO:0003735">
    <property type="term" value="F:structural constituent of ribosome"/>
    <property type="evidence" value="ECO:0007669"/>
    <property type="project" value="InterPro"/>
</dbReference>
<dbReference type="GO" id="GO:0006412">
    <property type="term" value="P:translation"/>
    <property type="evidence" value="ECO:0007669"/>
    <property type="project" value="UniProtKB-UniRule"/>
</dbReference>
<dbReference type="FunFam" id="3.30.70.330:FF:000001">
    <property type="entry name" value="50S ribosomal protein L23"/>
    <property type="match status" value="1"/>
</dbReference>
<dbReference type="Gene3D" id="3.30.70.330">
    <property type="match status" value="1"/>
</dbReference>
<dbReference type="HAMAP" id="MF_01369_B">
    <property type="entry name" value="Ribosomal_uL23_B"/>
    <property type="match status" value="1"/>
</dbReference>
<dbReference type="InterPro" id="IPR012677">
    <property type="entry name" value="Nucleotide-bd_a/b_plait_sf"/>
</dbReference>
<dbReference type="InterPro" id="IPR013025">
    <property type="entry name" value="Ribosomal_uL23-like"/>
</dbReference>
<dbReference type="InterPro" id="IPR012678">
    <property type="entry name" value="Ribosomal_uL23/eL15/eS24_sf"/>
</dbReference>
<dbReference type="NCBIfam" id="NF004363">
    <property type="entry name" value="PRK05738.2-4"/>
    <property type="match status" value="1"/>
</dbReference>
<dbReference type="NCBIfam" id="NF004364">
    <property type="entry name" value="PRK05738.2-5"/>
    <property type="match status" value="1"/>
</dbReference>
<dbReference type="PANTHER" id="PTHR11620">
    <property type="entry name" value="60S RIBOSOMAL PROTEIN L23A"/>
    <property type="match status" value="1"/>
</dbReference>
<dbReference type="Pfam" id="PF00276">
    <property type="entry name" value="Ribosomal_L23"/>
    <property type="match status" value="1"/>
</dbReference>
<dbReference type="SUPFAM" id="SSF54189">
    <property type="entry name" value="Ribosomal proteins S24e, L23 and L15e"/>
    <property type="match status" value="1"/>
</dbReference>
<protein>
    <recommendedName>
        <fullName evidence="1">Large ribosomal subunit protein uL23</fullName>
    </recommendedName>
    <alternativeName>
        <fullName evidence="2">50S ribosomal protein L23</fullName>
    </alternativeName>
</protein>
<proteinExistence type="inferred from homology"/>
<sequence length="101" mass="11239">MSGSINKDPRDVIIAPVVSEKSYGLIDEGKYTFLVDPRSNKSEIKQAVERIFNVDVASVNTLNRSGKRRRTRFGWGQRKSTKRAIVTLKDGTIDIFGGPLA</sequence>
<reference key="1">
    <citation type="journal article" date="2010" name="J. Bacteriol.">
        <title>Genome sequence of the Fleming strain of Micrococcus luteus, a simple free-living actinobacterium.</title>
        <authorList>
            <person name="Young M."/>
            <person name="Artsatbanov V."/>
            <person name="Beller H.R."/>
            <person name="Chandra G."/>
            <person name="Chater K.F."/>
            <person name="Dover L.G."/>
            <person name="Goh E.B."/>
            <person name="Kahan T."/>
            <person name="Kaprelyants A.S."/>
            <person name="Kyrpides N."/>
            <person name="Lapidus A."/>
            <person name="Lowry S.R."/>
            <person name="Lykidis A."/>
            <person name="Mahillon J."/>
            <person name="Markowitz V."/>
            <person name="Mavromatis K."/>
            <person name="Mukamolova G.V."/>
            <person name="Oren A."/>
            <person name="Rokem J.S."/>
            <person name="Smith M.C."/>
            <person name="Young D.I."/>
            <person name="Greenblatt C.L."/>
        </authorList>
    </citation>
    <scope>NUCLEOTIDE SEQUENCE [LARGE SCALE GENOMIC DNA]</scope>
    <source>
        <strain>ATCC 4698 / DSM 20030 / JCM 1464 / CCM 169 / CCUG 5858 / IAM 1056 / NBRC 3333 / NCIMB 9278 / NCTC 2665 / VKM Ac-2230</strain>
    </source>
</reference>